<reference key="1">
    <citation type="journal article" date="1997" name="Mamm. Genome">
        <title>FISH mapping of the IGF2 gene in horse and donkey-detection of homoeology with HSA11.</title>
        <authorList>
            <person name="Raudsepp T."/>
            <person name="Otte K."/>
            <person name="Rozell B."/>
            <person name="Chowdhary B.P."/>
        </authorList>
    </citation>
    <scope>NUCLEOTIDE SEQUENCE [GENOMIC DNA]</scope>
</reference>
<reference key="2">
    <citation type="journal article" date="1994" name="Gen. Comp. Endocrinol.">
        <title>Insulin-like growth factor II in the horse: determination of a cDNA nucleotide sequence and expression in fetal and adult tissue.</title>
        <authorList>
            <person name="Otte K."/>
            <person name="Engstrom W."/>
        </authorList>
    </citation>
    <scope>NUCLEOTIDE SEQUENCE [MRNA] OF 25-117</scope>
    <source>
        <tissue>Liver</tissue>
    </source>
</reference>
<gene>
    <name evidence="6" type="primary">IGF2</name>
    <name evidence="7" type="synonym">IGF-2</name>
</gene>
<evidence type="ECO:0000250" key="1"/>
<evidence type="ECO:0000250" key="2">
    <source>
        <dbReference type="UniProtKB" id="P01344"/>
    </source>
</evidence>
<evidence type="ECO:0000250" key="3">
    <source>
        <dbReference type="UniProtKB" id="P07456"/>
    </source>
</evidence>
<evidence type="ECO:0000250" key="4">
    <source>
        <dbReference type="UniProtKB" id="P09535"/>
    </source>
</evidence>
<evidence type="ECO:0000303" key="5">
    <source>
    </source>
</evidence>
<evidence type="ECO:0000303" key="6">
    <source>
    </source>
</evidence>
<evidence type="ECO:0000305" key="7"/>
<feature type="signal peptide" evidence="1">
    <location>
        <begin position="1"/>
        <end position="24"/>
    </location>
</feature>
<feature type="chain" id="PRO_0000015715" description="Insulin-like growth factor 2">
    <location>
        <begin position="25"/>
        <end position="91"/>
    </location>
</feature>
<feature type="propeptide" id="PRO_0000015716" description="E peptide">
    <location>
        <begin position="92"/>
        <end position="181"/>
    </location>
</feature>
<feature type="peptide" id="PRO_0000370375" description="Preptin">
    <location>
        <begin position="93"/>
        <end position="126"/>
    </location>
</feature>
<feature type="region of interest" description="B">
    <location>
        <begin position="25"/>
        <end position="52"/>
    </location>
</feature>
<feature type="region of interest" description="C">
    <location>
        <begin position="53"/>
        <end position="64"/>
    </location>
</feature>
<feature type="region of interest" description="A">
    <location>
        <begin position="65"/>
        <end position="85"/>
    </location>
</feature>
<feature type="region of interest" description="D">
    <location>
        <begin position="86"/>
        <end position="91"/>
    </location>
</feature>
<feature type="site" description="Important for interaction with integrin" evidence="2">
    <location>
        <position position="48"/>
    </location>
</feature>
<feature type="site" description="Important for interaction with integrin" evidence="2">
    <location>
        <position position="58"/>
    </location>
</feature>
<feature type="site" description="Important for interaction with integrin" evidence="2">
    <location>
        <position position="61"/>
    </location>
</feature>
<feature type="site" description="Important for interaction with integrin" evidence="2">
    <location>
        <position position="62"/>
    </location>
</feature>
<feature type="glycosylation site" description="O-linked (GalNAc...) threonine" evidence="3">
    <location>
        <position position="163"/>
    </location>
</feature>
<feature type="disulfide bond" evidence="1">
    <location>
        <begin position="33"/>
        <end position="71"/>
    </location>
</feature>
<feature type="disulfide bond" evidence="1">
    <location>
        <begin position="45"/>
        <end position="84"/>
    </location>
</feature>
<feature type="disulfide bond" evidence="1">
    <location>
        <begin position="70"/>
        <end position="75"/>
    </location>
</feature>
<feature type="sequence conflict" description="In Ref. 2." evidence="7" ref="2">
    <original>V</original>
    <variation>G</variation>
    <location>
        <position position="111"/>
    </location>
</feature>
<feature type="sequence conflict" description="In Ref. 2." evidence="7" ref="2">
    <original>L</original>
    <variation>R</variation>
    <location>
        <position position="113"/>
    </location>
</feature>
<organism>
    <name type="scientific">Equus caballus</name>
    <name type="common">Horse</name>
    <dbReference type="NCBI Taxonomy" id="9796"/>
    <lineage>
        <taxon>Eukaryota</taxon>
        <taxon>Metazoa</taxon>
        <taxon>Chordata</taxon>
        <taxon>Craniata</taxon>
        <taxon>Vertebrata</taxon>
        <taxon>Euteleostomi</taxon>
        <taxon>Mammalia</taxon>
        <taxon>Eutheria</taxon>
        <taxon>Laurasiatheria</taxon>
        <taxon>Perissodactyla</taxon>
        <taxon>Equidae</taxon>
        <taxon>Equus</taxon>
    </lineage>
</organism>
<dbReference type="EMBL" id="AF020599">
    <property type="protein sequence ID" value="AAC48807.1"/>
    <property type="molecule type" value="Genomic_DNA"/>
</dbReference>
<dbReference type="EMBL" id="U11241">
    <property type="protein sequence ID" value="AAA73915.1"/>
    <property type="molecule type" value="mRNA"/>
</dbReference>
<dbReference type="PIR" id="I53642">
    <property type="entry name" value="I53642"/>
</dbReference>
<dbReference type="RefSeq" id="NP_001108011.1">
    <property type="nucleotide sequence ID" value="NM_001114539.2"/>
</dbReference>
<dbReference type="RefSeq" id="XP_023509548.1">
    <property type="nucleotide sequence ID" value="XM_023653780.2"/>
</dbReference>
<dbReference type="RefSeq" id="XP_023509549.1">
    <property type="nucleotide sequence ID" value="XM_023653781.2"/>
</dbReference>
<dbReference type="RefSeq" id="XP_023509550.1">
    <property type="nucleotide sequence ID" value="XM_023653782.2"/>
</dbReference>
<dbReference type="RefSeq" id="XP_023509551.1">
    <property type="nucleotide sequence ID" value="XM_023653783.2"/>
</dbReference>
<dbReference type="RefSeq" id="XP_070084494.1">
    <property type="nucleotide sequence ID" value="XM_070228393.1"/>
</dbReference>
<dbReference type="RefSeq" id="XP_070084495.1">
    <property type="nucleotide sequence ID" value="XM_070228394.1"/>
</dbReference>
<dbReference type="RefSeq" id="XP_070084496.1">
    <property type="nucleotide sequence ID" value="XM_070228395.1"/>
</dbReference>
<dbReference type="RefSeq" id="XP_070084501.1">
    <property type="nucleotide sequence ID" value="XM_070228400.1"/>
</dbReference>
<dbReference type="RefSeq" id="XP_070084502.1">
    <property type="nucleotide sequence ID" value="XM_070228401.1"/>
</dbReference>
<dbReference type="RefSeq" id="XP_070084503.1">
    <property type="nucleotide sequence ID" value="XM_070228402.1"/>
</dbReference>
<dbReference type="RefSeq" id="XP_070084504.1">
    <property type="nucleotide sequence ID" value="XM_070228403.1"/>
</dbReference>
<dbReference type="RefSeq" id="XP_070084505.1">
    <property type="nucleotide sequence ID" value="XM_070228404.1"/>
</dbReference>
<dbReference type="RefSeq" id="XP_070084506.1">
    <property type="nucleotide sequence ID" value="XM_070228405.1"/>
</dbReference>
<dbReference type="RefSeq" id="XP_070084507.1">
    <property type="nucleotide sequence ID" value="XM_070228406.1"/>
</dbReference>
<dbReference type="RefSeq" id="XP_070084508.1">
    <property type="nucleotide sequence ID" value="XM_070228407.1"/>
</dbReference>
<dbReference type="RefSeq" id="XP_070084509.1">
    <property type="nucleotide sequence ID" value="XM_070228408.1"/>
</dbReference>
<dbReference type="RefSeq" id="XP_070084510.1">
    <property type="nucleotide sequence ID" value="XM_070228409.1"/>
</dbReference>
<dbReference type="RefSeq" id="XP_070084511.1">
    <property type="nucleotide sequence ID" value="XM_070228410.1"/>
</dbReference>
<dbReference type="RefSeq" id="XP_070084512.1">
    <property type="nucleotide sequence ID" value="XM_070228411.1"/>
</dbReference>
<dbReference type="RefSeq" id="XP_070084513.1">
    <property type="nucleotide sequence ID" value="XM_070228412.1"/>
</dbReference>
<dbReference type="RefSeq" id="XP_070084514.1">
    <property type="nucleotide sequence ID" value="XM_070228413.1"/>
</dbReference>
<dbReference type="RefSeq" id="XP_070084515.1">
    <property type="nucleotide sequence ID" value="XM_070228414.1"/>
</dbReference>
<dbReference type="RefSeq" id="XP_070084516.1">
    <property type="nucleotide sequence ID" value="XM_070228415.1"/>
</dbReference>
<dbReference type="RefSeq" id="XP_070084517.1">
    <property type="nucleotide sequence ID" value="XM_070228416.1"/>
</dbReference>
<dbReference type="RefSeq" id="XP_070084518.1">
    <property type="nucleotide sequence ID" value="XM_070228417.1"/>
</dbReference>
<dbReference type="RefSeq" id="XP_070084519.1">
    <property type="nucleotide sequence ID" value="XM_070228418.1"/>
</dbReference>
<dbReference type="RefSeq" id="XP_070084520.1">
    <property type="nucleotide sequence ID" value="XM_070228419.1"/>
</dbReference>
<dbReference type="RefSeq" id="XP_070084521.1">
    <property type="nucleotide sequence ID" value="XM_070228420.1"/>
</dbReference>
<dbReference type="RefSeq" id="XP_070084522.1">
    <property type="nucleotide sequence ID" value="XM_070228421.1"/>
</dbReference>
<dbReference type="RefSeq" id="XP_070084523.1">
    <property type="nucleotide sequence ID" value="XM_070228422.1"/>
</dbReference>
<dbReference type="RefSeq" id="XP_070084524.1">
    <property type="nucleotide sequence ID" value="XM_070228423.1"/>
</dbReference>
<dbReference type="RefSeq" id="XP_070084525.1">
    <property type="nucleotide sequence ID" value="XM_070228424.1"/>
</dbReference>
<dbReference type="RefSeq" id="XP_070084526.1">
    <property type="nucleotide sequence ID" value="XM_070228425.1"/>
</dbReference>
<dbReference type="RefSeq" id="XP_070084527.1">
    <property type="nucleotide sequence ID" value="XM_070228426.1"/>
</dbReference>
<dbReference type="RefSeq" id="XP_070084528.1">
    <property type="nucleotide sequence ID" value="XM_070228427.1"/>
</dbReference>
<dbReference type="RefSeq" id="XP_070084529.1">
    <property type="nucleotide sequence ID" value="XM_070228428.1"/>
</dbReference>
<dbReference type="RefSeq" id="XP_070084530.1">
    <property type="nucleotide sequence ID" value="XM_070228429.1"/>
</dbReference>
<dbReference type="RefSeq" id="XP_070084531.1">
    <property type="nucleotide sequence ID" value="XM_070228430.1"/>
</dbReference>
<dbReference type="RefSeq" id="XP_070084533.1">
    <property type="nucleotide sequence ID" value="XM_070228432.1"/>
</dbReference>
<dbReference type="BMRB" id="P51459"/>
<dbReference type="SMR" id="P51459"/>
<dbReference type="FunCoup" id="P51459">
    <property type="interactions" value="379"/>
</dbReference>
<dbReference type="STRING" id="9796.ENSECAP00000052781"/>
<dbReference type="GlyCosmos" id="P51459">
    <property type="glycosylation" value="1 site, No reported glycans"/>
</dbReference>
<dbReference type="PaxDb" id="9796-ENSECAP00000052781"/>
<dbReference type="GeneID" id="100034182"/>
<dbReference type="KEGG" id="ecb:100034182"/>
<dbReference type="CTD" id="3481"/>
<dbReference type="InParanoid" id="P51459"/>
<dbReference type="OrthoDB" id="9449995at2759"/>
<dbReference type="Proteomes" id="UP000002281">
    <property type="component" value="Unplaced"/>
</dbReference>
<dbReference type="GO" id="GO:0005615">
    <property type="term" value="C:extracellular space"/>
    <property type="evidence" value="ECO:0000318"/>
    <property type="project" value="GO_Central"/>
</dbReference>
<dbReference type="GO" id="GO:0008083">
    <property type="term" value="F:growth factor activity"/>
    <property type="evidence" value="ECO:0000318"/>
    <property type="project" value="GO_Central"/>
</dbReference>
<dbReference type="GO" id="GO:0005179">
    <property type="term" value="F:hormone activity"/>
    <property type="evidence" value="ECO:0007669"/>
    <property type="project" value="UniProtKB-KW"/>
</dbReference>
<dbReference type="GO" id="GO:0005159">
    <property type="term" value="F:insulin-like growth factor receptor binding"/>
    <property type="evidence" value="ECO:0000318"/>
    <property type="project" value="GO_Central"/>
</dbReference>
<dbReference type="GO" id="GO:0005178">
    <property type="term" value="F:integrin binding"/>
    <property type="evidence" value="ECO:0000250"/>
    <property type="project" value="UniProtKB"/>
</dbReference>
<dbReference type="GO" id="GO:0043539">
    <property type="term" value="F:protein serine/threonine kinase activator activity"/>
    <property type="evidence" value="ECO:0000318"/>
    <property type="project" value="GO_Central"/>
</dbReference>
<dbReference type="GO" id="GO:0001892">
    <property type="term" value="P:embryonic placenta development"/>
    <property type="evidence" value="ECO:0000250"/>
    <property type="project" value="UniProtKB"/>
</dbReference>
<dbReference type="GO" id="GO:0060669">
    <property type="term" value="P:embryonic placenta morphogenesis"/>
    <property type="evidence" value="ECO:0000250"/>
    <property type="project" value="UniProtKB"/>
</dbReference>
<dbReference type="GO" id="GO:0006006">
    <property type="term" value="P:glucose metabolic process"/>
    <property type="evidence" value="ECO:0007669"/>
    <property type="project" value="UniProtKB-KW"/>
</dbReference>
<dbReference type="GO" id="GO:0001701">
    <property type="term" value="P:in utero embryonic development"/>
    <property type="evidence" value="ECO:0000250"/>
    <property type="project" value="UniProtKB"/>
</dbReference>
<dbReference type="GO" id="GO:0051148">
    <property type="term" value="P:negative regulation of muscle cell differentiation"/>
    <property type="evidence" value="ECO:0000250"/>
    <property type="project" value="UniProtKB"/>
</dbReference>
<dbReference type="GO" id="GO:0000122">
    <property type="term" value="P:negative regulation of transcription by RNA polymerase II"/>
    <property type="evidence" value="ECO:0000250"/>
    <property type="project" value="UniProtKB"/>
</dbReference>
<dbReference type="GO" id="GO:0001503">
    <property type="term" value="P:ossification"/>
    <property type="evidence" value="ECO:0007669"/>
    <property type="project" value="UniProtKB-KW"/>
</dbReference>
<dbReference type="GO" id="GO:0042104">
    <property type="term" value="P:positive regulation of activated T cell proliferation"/>
    <property type="evidence" value="ECO:0000318"/>
    <property type="project" value="GO_Central"/>
</dbReference>
<dbReference type="GO" id="GO:0051781">
    <property type="term" value="P:positive regulation of cell division"/>
    <property type="evidence" value="ECO:0007669"/>
    <property type="project" value="UniProtKB-KW"/>
</dbReference>
<dbReference type="GO" id="GO:0008284">
    <property type="term" value="P:positive regulation of cell population proliferation"/>
    <property type="evidence" value="ECO:0000250"/>
    <property type="project" value="UniProtKB"/>
</dbReference>
<dbReference type="GO" id="GO:0046628">
    <property type="term" value="P:positive regulation of insulin receptor signaling pathway"/>
    <property type="evidence" value="ECO:0000318"/>
    <property type="project" value="GO_Central"/>
</dbReference>
<dbReference type="GO" id="GO:0043410">
    <property type="term" value="P:positive regulation of MAPK cascade"/>
    <property type="evidence" value="ECO:0000318"/>
    <property type="project" value="GO_Central"/>
</dbReference>
<dbReference type="GO" id="GO:0045944">
    <property type="term" value="P:positive regulation of transcription by RNA polymerase II"/>
    <property type="evidence" value="ECO:0000318"/>
    <property type="project" value="GO_Central"/>
</dbReference>
<dbReference type="GO" id="GO:1905564">
    <property type="term" value="P:positive regulation of vascular endothelial cell proliferation"/>
    <property type="evidence" value="ECO:0000318"/>
    <property type="project" value="GO_Central"/>
</dbReference>
<dbReference type="GO" id="GO:0051147">
    <property type="term" value="P:regulation of muscle cell differentiation"/>
    <property type="evidence" value="ECO:0000250"/>
    <property type="project" value="UniProtKB"/>
</dbReference>
<dbReference type="CDD" id="cd04368">
    <property type="entry name" value="IlGF"/>
    <property type="match status" value="1"/>
</dbReference>
<dbReference type="FunFam" id="1.10.100.10:FF:000002">
    <property type="entry name" value="Insulin-like growth factor II preproprotein"/>
    <property type="match status" value="1"/>
</dbReference>
<dbReference type="Gene3D" id="1.10.100.10">
    <property type="entry name" value="Insulin-like"/>
    <property type="match status" value="1"/>
</dbReference>
<dbReference type="InterPro" id="IPR022334">
    <property type="entry name" value="IGF2"/>
</dbReference>
<dbReference type="InterPro" id="IPR013576">
    <property type="entry name" value="IGF2_C"/>
</dbReference>
<dbReference type="InterPro" id="IPR016179">
    <property type="entry name" value="Insulin-like"/>
</dbReference>
<dbReference type="InterPro" id="IPR022350">
    <property type="entry name" value="Insulin-like_growth_factor"/>
</dbReference>
<dbReference type="InterPro" id="IPR036438">
    <property type="entry name" value="Insulin-like_sf"/>
</dbReference>
<dbReference type="InterPro" id="IPR022353">
    <property type="entry name" value="Insulin_CS"/>
</dbReference>
<dbReference type="InterPro" id="IPR022352">
    <property type="entry name" value="Insulin_family"/>
</dbReference>
<dbReference type="PANTHER" id="PTHR46886">
    <property type="entry name" value="INSULIN-LIKE GROWTH FACTOR II"/>
    <property type="match status" value="1"/>
</dbReference>
<dbReference type="PANTHER" id="PTHR46886:SF1">
    <property type="entry name" value="INSULIN-LIKE GROWTH FACTOR II"/>
    <property type="match status" value="1"/>
</dbReference>
<dbReference type="Pfam" id="PF08365">
    <property type="entry name" value="IGF2_C"/>
    <property type="match status" value="1"/>
</dbReference>
<dbReference type="Pfam" id="PF00049">
    <property type="entry name" value="Insulin"/>
    <property type="match status" value="2"/>
</dbReference>
<dbReference type="PRINTS" id="PR02002">
    <property type="entry name" value="INSLNLIKEGF"/>
</dbReference>
<dbReference type="PRINTS" id="PR02006">
    <property type="entry name" value="INSLNLIKEGF2"/>
</dbReference>
<dbReference type="PRINTS" id="PR00276">
    <property type="entry name" value="INSULINFAMLY"/>
</dbReference>
<dbReference type="SMART" id="SM00078">
    <property type="entry name" value="IlGF"/>
    <property type="match status" value="1"/>
</dbReference>
<dbReference type="SUPFAM" id="SSF56994">
    <property type="entry name" value="Insulin-like"/>
    <property type="match status" value="1"/>
</dbReference>
<dbReference type="PROSITE" id="PS00262">
    <property type="entry name" value="INSULIN"/>
    <property type="match status" value="1"/>
</dbReference>
<name>IGF2_HORSE</name>
<comment type="function">
    <text evidence="2 4">The insulin-like growth factors possess growth-promoting activity (By similarity). Major fetal growth hormone in mammals. Plays a key role in regulating fetoplacental development. IGF2 is influenced by placental lactogen. Also involved in tissue differentiation. In adults, involved in glucose metabolism in adipose tissue, skeletal muscle and liver. Acts as a ligand for integrin which is required for IGF2 signaling. Positively regulates myogenic transcription factor MYOD1 function by facilitating the recruitment of transcriptional coactivators, thereby controlling muscle terminal differentiation (By similarity). Inhibits myoblast differentiation and modulates metabolism via increasing the mitochondrial respiration rate (By similarity).</text>
</comment>
<comment type="function">
    <text evidence="2 4">Preptin undergoes glucose-mediated co-secretion with insulin, and acts as a physiological amplifier of glucose-mediated insulin secretion. Exhibits osteogenic properties by increasing osteoblast mitogenic activity through phosphoactivation of MAPK1 and MAPK3.</text>
</comment>
<comment type="subunit">
    <text evidence="2 4">Interacts with MYORG; this interaction is required for IGF2 secretion. Interacts with integrins ITGAV:ITGB3 and ITGA6:ITGB4; integrin-binding is required for IGF2 signaling. Interacts with IGFBP2.</text>
</comment>
<comment type="subcellular location">
    <subcellularLocation>
        <location evidence="2 4">Secreted</location>
    </subcellularLocation>
</comment>
<comment type="PTM">
    <text evidence="2">Proteolytically processed by PCSK4, proIGF2 is cleaved at Arg-128 and Arg-92 to generate big-IGF2 and mature IGF2.</text>
</comment>
<comment type="miscellaneous">
    <text evidence="4">The IGF2 locus is imprinted. Paternal inherited gene is expressed, while the maternal inherited gene is imprinted, hence silenced.</text>
</comment>
<comment type="similarity">
    <text evidence="7">Belongs to the insulin family.</text>
</comment>
<sequence length="181" mass="20361">MGIPVGKSLLMLFTFLAFASCCIAAYRPSETLCGGELVDTLQFVCGDRGFYFSRPASRINRRSRGIVEECCFRSCDLALLETYCATPAKSERDVSTPPTVLPDDSPRYPVVKLFQYNAWKQSTQRLRRGLPALLRTRRGRMLVKELEAFREAQRHRPLIALPTEDPTPHGAAFVEVSSDLQ</sequence>
<accession>P51459</accession>
<accession>O18837</accession>
<protein>
    <recommendedName>
        <fullName evidence="2">Insulin-like growth factor 2</fullName>
    </recommendedName>
    <alternativeName>
        <fullName evidence="5">Insulin-like growth factor II</fullName>
        <shortName evidence="5">IGF-II</shortName>
    </alternativeName>
    <alternativeName>
        <fullName>Somatomedin-A</fullName>
    </alternativeName>
    <component>
        <recommendedName>
            <fullName evidence="2">Preptin</fullName>
        </recommendedName>
    </component>
</protein>
<keyword id="KW-0119">Carbohydrate metabolism</keyword>
<keyword id="KW-0165">Cleavage on pair of basic residues</keyword>
<keyword id="KW-1015">Disulfide bond</keyword>
<keyword id="KW-0313">Glucose metabolism</keyword>
<keyword id="KW-0325">Glycoprotein</keyword>
<keyword id="KW-0339">Growth factor</keyword>
<keyword id="KW-0372">Hormone</keyword>
<keyword id="KW-0497">Mitogen</keyword>
<keyword id="KW-0892">Osteogenesis</keyword>
<keyword id="KW-1185">Reference proteome</keyword>
<keyword id="KW-0964">Secreted</keyword>
<keyword id="KW-0732">Signal</keyword>
<proteinExistence type="evidence at transcript level"/>